<keyword id="KW-0011">Acute phase</keyword>
<keyword id="KW-0325">Glycoprotein</keyword>
<keyword id="KW-0597">Phosphoprotein</keyword>
<keyword id="KW-0646">Protease inhibitor</keyword>
<keyword id="KW-0964">Secreted</keyword>
<keyword id="KW-0722">Serine protease inhibitor</keyword>
<keyword id="KW-0732">Signal</keyword>
<gene>
    <name type="primary">SERPINA1</name>
</gene>
<proteinExistence type="evidence at transcript level"/>
<accession>O00394</accession>
<feature type="signal peptide" evidence="3">
    <location>
        <begin position="1" status="less than"/>
        <end position="2"/>
    </location>
</feature>
<feature type="chain" id="PRO_0000032376" description="Alpha-1-antitrypsin">
    <location>
        <begin position="3"/>
        <end position="396"/>
    </location>
</feature>
<feature type="region of interest" description="Disordered" evidence="4">
    <location>
        <begin position="1"/>
        <end position="24"/>
    </location>
</feature>
<feature type="region of interest" description="RCL">
    <location>
        <begin position="351"/>
        <end position="370"/>
    </location>
</feature>
<feature type="compositionally biased region" description="Basic and acidic residues" evidence="4">
    <location>
        <begin position="14"/>
        <end position="24"/>
    </location>
</feature>
<feature type="site" description="Reactive bond" evidence="1">
    <location>
        <begin position="360"/>
        <end position="361"/>
    </location>
</feature>
<feature type="modified residue" description="Phosphoserine" evidence="2">
    <location>
        <position position="16"/>
    </location>
</feature>
<feature type="modified residue" description="Phosphoserine" evidence="2">
    <location>
        <position position="361"/>
    </location>
</feature>
<feature type="glycosylation site" description="N-linked (GlcNAc...) asparagine" evidence="3">
    <location>
        <position position="48"/>
    </location>
</feature>
<feature type="glycosylation site" description="N-linked (GlcNAc...) asparagine" evidence="3">
    <location>
        <position position="85"/>
    </location>
</feature>
<feature type="glycosylation site" description="N-linked (GlcNAc...) asparagine" evidence="3">
    <location>
        <position position="123"/>
    </location>
</feature>
<feature type="glycosylation site" description="N-linked (GlcNAc...) asparagine" evidence="3">
    <location>
        <position position="249"/>
    </location>
</feature>
<feature type="non-terminal residue">
    <location>
        <position position="1"/>
    </location>
</feature>
<name>A1AT_CHLAE</name>
<dbReference type="EMBL" id="AB004044">
    <property type="protein sequence ID" value="BAA20264.1"/>
    <property type="molecule type" value="mRNA"/>
</dbReference>
<dbReference type="SMR" id="O00394"/>
<dbReference type="MEROPS" id="I04.001"/>
<dbReference type="GlyCosmos" id="O00394">
    <property type="glycosylation" value="4 sites, No reported glycans"/>
</dbReference>
<dbReference type="GO" id="GO:0005615">
    <property type="term" value="C:extracellular space"/>
    <property type="evidence" value="ECO:0007669"/>
    <property type="project" value="InterPro"/>
</dbReference>
<dbReference type="GO" id="GO:0004867">
    <property type="term" value="F:serine-type endopeptidase inhibitor activity"/>
    <property type="evidence" value="ECO:0000303"/>
    <property type="project" value="UniProtKB"/>
</dbReference>
<dbReference type="GO" id="GO:0006953">
    <property type="term" value="P:acute-phase response"/>
    <property type="evidence" value="ECO:0007669"/>
    <property type="project" value="UniProtKB-KW"/>
</dbReference>
<dbReference type="GO" id="GO:0030162">
    <property type="term" value="P:regulation of proteolysis"/>
    <property type="evidence" value="ECO:0000303"/>
    <property type="project" value="UniProtKB"/>
</dbReference>
<dbReference type="CDD" id="cd02056">
    <property type="entry name" value="serpinA1_A1AT"/>
    <property type="match status" value="1"/>
</dbReference>
<dbReference type="FunFam" id="2.30.39.10:FF:000003">
    <property type="entry name" value="alpha-1-antitrypsin isoform X1"/>
    <property type="match status" value="1"/>
</dbReference>
<dbReference type="FunFam" id="3.30.497.10:FF:000001">
    <property type="entry name" value="Serine protease inhibitor"/>
    <property type="match status" value="1"/>
</dbReference>
<dbReference type="FunFam" id="2.10.310.10:FF:000001">
    <property type="entry name" value="Serpin family A member 1"/>
    <property type="match status" value="1"/>
</dbReference>
<dbReference type="Gene3D" id="2.30.39.10">
    <property type="entry name" value="Alpha-1-antitrypsin, domain 1"/>
    <property type="match status" value="1"/>
</dbReference>
<dbReference type="Gene3D" id="3.30.497.10">
    <property type="entry name" value="Antithrombin, subunit I, domain 2"/>
    <property type="match status" value="1"/>
</dbReference>
<dbReference type="Gene3D" id="2.10.310.10">
    <property type="entry name" value="Serpins superfamily"/>
    <property type="match status" value="1"/>
</dbReference>
<dbReference type="InterPro" id="IPR023795">
    <property type="entry name" value="Serpin_CS"/>
</dbReference>
<dbReference type="InterPro" id="IPR023796">
    <property type="entry name" value="Serpin_dom"/>
</dbReference>
<dbReference type="InterPro" id="IPR000215">
    <property type="entry name" value="Serpin_fam"/>
</dbReference>
<dbReference type="InterPro" id="IPR036186">
    <property type="entry name" value="Serpin_sf"/>
</dbReference>
<dbReference type="InterPro" id="IPR042178">
    <property type="entry name" value="Serpin_sf_1"/>
</dbReference>
<dbReference type="InterPro" id="IPR042185">
    <property type="entry name" value="Serpin_sf_2"/>
</dbReference>
<dbReference type="PANTHER" id="PTHR11461:SF165">
    <property type="entry name" value="ALPHA-1-ANTITRYPSIN"/>
    <property type="match status" value="1"/>
</dbReference>
<dbReference type="PANTHER" id="PTHR11461">
    <property type="entry name" value="SERINE PROTEASE INHIBITOR, SERPIN"/>
    <property type="match status" value="1"/>
</dbReference>
<dbReference type="Pfam" id="PF00079">
    <property type="entry name" value="Serpin"/>
    <property type="match status" value="1"/>
</dbReference>
<dbReference type="SMART" id="SM00093">
    <property type="entry name" value="SERPIN"/>
    <property type="match status" value="1"/>
</dbReference>
<dbReference type="SUPFAM" id="SSF56574">
    <property type="entry name" value="Serpins"/>
    <property type="match status" value="1"/>
</dbReference>
<dbReference type="PROSITE" id="PS00284">
    <property type="entry name" value="SERPIN"/>
    <property type="match status" value="1"/>
</dbReference>
<organism>
    <name type="scientific">Chlorocebus aethiops</name>
    <name type="common">Green monkey</name>
    <name type="synonym">Cercopithecus aethiops</name>
    <dbReference type="NCBI Taxonomy" id="9534"/>
    <lineage>
        <taxon>Eukaryota</taxon>
        <taxon>Metazoa</taxon>
        <taxon>Chordata</taxon>
        <taxon>Craniata</taxon>
        <taxon>Vertebrata</taxon>
        <taxon>Euteleostomi</taxon>
        <taxon>Mammalia</taxon>
        <taxon>Eutheria</taxon>
        <taxon>Euarchontoglires</taxon>
        <taxon>Primates</taxon>
        <taxon>Haplorrhini</taxon>
        <taxon>Catarrhini</taxon>
        <taxon>Cercopithecidae</taxon>
        <taxon>Cercopithecinae</taxon>
        <taxon>Chlorocebus</taxon>
    </lineage>
</organism>
<protein>
    <recommendedName>
        <fullName>Alpha-1-antitrypsin</fullName>
    </recommendedName>
    <alternativeName>
        <fullName>Alpha-1 protease inhibitor</fullName>
    </alternativeName>
    <alternativeName>
        <fullName>Alpha-1-antiproteinase</fullName>
    </alternativeName>
    <alternativeName>
        <fullName>Serpin A1</fullName>
    </alternativeName>
</protein>
<reference key="1">
    <citation type="submission" date="1997-05" db="EMBL/GenBank/DDBJ databases">
        <title>Cloning and sequencing of complementary DNAs encoding alpha-2-HS glycoprotein, alpha-1-antitrypsin, and beta-actin from African green monkey, Cercopithecus aethiops.</title>
        <authorList>
            <person name="Yoshida K."/>
            <person name="Suzuki Y."/>
            <person name="Yamamoto K."/>
            <person name="Watanabe M."/>
            <person name="Sinohara H."/>
        </authorList>
    </citation>
    <scope>NUCLEOTIDE SEQUENCE [MRNA]</scope>
    <source>
        <tissue>Kidney</tissue>
    </source>
</reference>
<comment type="function">
    <text evidence="1">Inhibitor of serine proteases. Its primary target is elastase, but it also has a moderate affinity for plasmin and thrombin. Inhibits trypsin, chymotrypsin and plasminogen activator (By similarity).</text>
</comment>
<comment type="subunit">
    <text evidence="2">Interacts with CELA2A (By similarity). Interacts with ERGIC3 and LMAN1/ERGIC53 (By similarity). Interacts with PRSS1/Trypsin (By similarity).</text>
</comment>
<comment type="subcellular location">
    <subcellularLocation>
        <location evidence="1">Secreted</location>
    </subcellularLocation>
</comment>
<comment type="tissue specificity">
    <text>Plasma.</text>
</comment>
<comment type="domain">
    <text evidence="1">The reactive center loop (RCL) extends out from the body of the protein and directs binding to the target protease. The protease cleaves the serpin at the reactive site within the RCL, establishing a covalent linkage between the carboxyl group of the serpin reactive site and the serine hydroxyl of the protease. The resulting inactive serpin-protease complex is highly stable (By similarity).</text>
</comment>
<comment type="similarity">
    <text evidence="5">Belongs to the serpin family.</text>
</comment>
<sequence>HVEDPQGDAAQKTDTSHHDQEHSTFNKITPSLAEFAFSLYRQLAHQSNSTNIFFSPVSIATAFAMLSLGTKADTHSEILEGLNFNLTEIPEAQIHEGFQELLHTLNKPDSQLQLTTGNGLFLNKSVKVVDKFLEDVKKLYHSEAFSVNFEDTEEAKKQINNYVEKGTQGKIVDLVKELDRDTVFALVNYIFFKGKWERPFEVEATKEEDFHVDQATTVKVPMMRRLGMFNIYHCEKLSSWVLLMKYLGNATAIFFLPDEGKLQHLENELTHDIITKFLENENRRSANLHLPKLAITGTYDLKTVLGHLGITKVFSNGADLSGVTEDAPLKLSKAVHKAVLTIDEKGTEAAGAMFLEAIPMSIPPEVKFNKPFVFLMIEQNTKSPLFMGKVVNPTQK</sequence>
<evidence type="ECO:0000250" key="1"/>
<evidence type="ECO:0000250" key="2">
    <source>
        <dbReference type="UniProtKB" id="P01009"/>
    </source>
</evidence>
<evidence type="ECO:0000255" key="3"/>
<evidence type="ECO:0000256" key="4">
    <source>
        <dbReference type="SAM" id="MobiDB-lite"/>
    </source>
</evidence>
<evidence type="ECO:0000305" key="5"/>